<evidence type="ECO:0000255" key="1">
    <source>
        <dbReference type="HAMAP-Rule" id="MF_00149"/>
    </source>
</evidence>
<evidence type="ECO:0000256" key="2">
    <source>
        <dbReference type="SAM" id="MobiDB-lite"/>
    </source>
</evidence>
<name>MUTL_LACLS</name>
<accession>Q02VS5</accession>
<gene>
    <name evidence="1" type="primary">mutL</name>
    <name type="ordered locus">LACR_2517</name>
</gene>
<feature type="chain" id="PRO_1000010035" description="DNA mismatch repair protein MutL">
    <location>
        <begin position="1"/>
        <end position="656"/>
    </location>
</feature>
<feature type="region of interest" description="Disordered" evidence="2">
    <location>
        <begin position="385"/>
        <end position="427"/>
    </location>
</feature>
<feature type="compositionally biased region" description="Polar residues" evidence="2">
    <location>
        <begin position="387"/>
        <end position="410"/>
    </location>
</feature>
<feature type="compositionally biased region" description="Basic and acidic residues" evidence="2">
    <location>
        <begin position="411"/>
        <end position="427"/>
    </location>
</feature>
<proteinExistence type="inferred from homology"/>
<keyword id="KW-0227">DNA damage</keyword>
<keyword id="KW-0234">DNA repair</keyword>
<organism>
    <name type="scientific">Lactococcus lactis subsp. cremoris (strain SK11)</name>
    <dbReference type="NCBI Taxonomy" id="272622"/>
    <lineage>
        <taxon>Bacteria</taxon>
        <taxon>Bacillati</taxon>
        <taxon>Bacillota</taxon>
        <taxon>Bacilli</taxon>
        <taxon>Lactobacillales</taxon>
        <taxon>Streptococcaceae</taxon>
        <taxon>Lactococcus</taxon>
        <taxon>Lactococcus cremoris subsp. cremoris</taxon>
    </lineage>
</organism>
<dbReference type="EMBL" id="CP000425">
    <property type="protein sequence ID" value="ABJ73947.1"/>
    <property type="molecule type" value="Genomic_DNA"/>
</dbReference>
<dbReference type="RefSeq" id="WP_011677256.1">
    <property type="nucleotide sequence ID" value="NC_008527.1"/>
</dbReference>
<dbReference type="SMR" id="Q02VS5"/>
<dbReference type="KEGG" id="llc:LACR_2517"/>
<dbReference type="HOGENOM" id="CLU_004131_4_1_9"/>
<dbReference type="Proteomes" id="UP000000240">
    <property type="component" value="Chromosome"/>
</dbReference>
<dbReference type="GO" id="GO:0032300">
    <property type="term" value="C:mismatch repair complex"/>
    <property type="evidence" value="ECO:0007669"/>
    <property type="project" value="InterPro"/>
</dbReference>
<dbReference type="GO" id="GO:0005524">
    <property type="term" value="F:ATP binding"/>
    <property type="evidence" value="ECO:0007669"/>
    <property type="project" value="InterPro"/>
</dbReference>
<dbReference type="GO" id="GO:0016887">
    <property type="term" value="F:ATP hydrolysis activity"/>
    <property type="evidence" value="ECO:0007669"/>
    <property type="project" value="InterPro"/>
</dbReference>
<dbReference type="GO" id="GO:0140664">
    <property type="term" value="F:ATP-dependent DNA damage sensor activity"/>
    <property type="evidence" value="ECO:0007669"/>
    <property type="project" value="InterPro"/>
</dbReference>
<dbReference type="GO" id="GO:0030983">
    <property type="term" value="F:mismatched DNA binding"/>
    <property type="evidence" value="ECO:0007669"/>
    <property type="project" value="InterPro"/>
</dbReference>
<dbReference type="GO" id="GO:0006298">
    <property type="term" value="P:mismatch repair"/>
    <property type="evidence" value="ECO:0007669"/>
    <property type="project" value="UniProtKB-UniRule"/>
</dbReference>
<dbReference type="CDD" id="cd16926">
    <property type="entry name" value="HATPase_MutL-MLH-PMS-like"/>
    <property type="match status" value="1"/>
</dbReference>
<dbReference type="CDD" id="cd00782">
    <property type="entry name" value="MutL_Trans"/>
    <property type="match status" value="1"/>
</dbReference>
<dbReference type="FunFam" id="3.30.565.10:FF:000003">
    <property type="entry name" value="DNA mismatch repair endonuclease MutL"/>
    <property type="match status" value="1"/>
</dbReference>
<dbReference type="Gene3D" id="3.30.230.10">
    <property type="match status" value="1"/>
</dbReference>
<dbReference type="Gene3D" id="3.30.565.10">
    <property type="entry name" value="Histidine kinase-like ATPase, C-terminal domain"/>
    <property type="match status" value="1"/>
</dbReference>
<dbReference type="Gene3D" id="3.30.1540.20">
    <property type="entry name" value="MutL, C-terminal domain, dimerisation subdomain"/>
    <property type="match status" value="1"/>
</dbReference>
<dbReference type="Gene3D" id="3.30.1370.100">
    <property type="entry name" value="MutL, C-terminal domain, regulatory subdomain"/>
    <property type="match status" value="1"/>
</dbReference>
<dbReference type="HAMAP" id="MF_00149">
    <property type="entry name" value="DNA_mis_repair"/>
    <property type="match status" value="1"/>
</dbReference>
<dbReference type="InterPro" id="IPR014762">
    <property type="entry name" value="DNA_mismatch_repair_CS"/>
</dbReference>
<dbReference type="InterPro" id="IPR020667">
    <property type="entry name" value="DNA_mismatch_repair_MutL"/>
</dbReference>
<dbReference type="InterPro" id="IPR013507">
    <property type="entry name" value="DNA_mismatch_S5_2-like"/>
</dbReference>
<dbReference type="InterPro" id="IPR036890">
    <property type="entry name" value="HATPase_C_sf"/>
</dbReference>
<dbReference type="InterPro" id="IPR002099">
    <property type="entry name" value="MutL/Mlh/PMS"/>
</dbReference>
<dbReference type="InterPro" id="IPR038973">
    <property type="entry name" value="MutL/Mlh/Pms-like"/>
</dbReference>
<dbReference type="InterPro" id="IPR014790">
    <property type="entry name" value="MutL_C"/>
</dbReference>
<dbReference type="InterPro" id="IPR042120">
    <property type="entry name" value="MutL_C_dimsub"/>
</dbReference>
<dbReference type="InterPro" id="IPR042121">
    <property type="entry name" value="MutL_C_regsub"/>
</dbReference>
<dbReference type="InterPro" id="IPR037198">
    <property type="entry name" value="MutL_C_sf"/>
</dbReference>
<dbReference type="InterPro" id="IPR020568">
    <property type="entry name" value="Ribosomal_Su5_D2-typ_SF"/>
</dbReference>
<dbReference type="InterPro" id="IPR014721">
    <property type="entry name" value="Ribsml_uS5_D2-typ_fold_subgr"/>
</dbReference>
<dbReference type="NCBIfam" id="TIGR00585">
    <property type="entry name" value="mutl"/>
    <property type="match status" value="1"/>
</dbReference>
<dbReference type="NCBIfam" id="NF000950">
    <property type="entry name" value="PRK00095.1-3"/>
    <property type="match status" value="1"/>
</dbReference>
<dbReference type="PANTHER" id="PTHR10073">
    <property type="entry name" value="DNA MISMATCH REPAIR PROTEIN MLH, PMS, MUTL"/>
    <property type="match status" value="1"/>
</dbReference>
<dbReference type="PANTHER" id="PTHR10073:SF12">
    <property type="entry name" value="DNA MISMATCH REPAIR PROTEIN MLH1"/>
    <property type="match status" value="1"/>
</dbReference>
<dbReference type="Pfam" id="PF01119">
    <property type="entry name" value="DNA_mis_repair"/>
    <property type="match status" value="1"/>
</dbReference>
<dbReference type="Pfam" id="PF13589">
    <property type="entry name" value="HATPase_c_3"/>
    <property type="match status" value="1"/>
</dbReference>
<dbReference type="Pfam" id="PF08676">
    <property type="entry name" value="MutL_C"/>
    <property type="match status" value="1"/>
</dbReference>
<dbReference type="SMART" id="SM01340">
    <property type="entry name" value="DNA_mis_repair"/>
    <property type="match status" value="1"/>
</dbReference>
<dbReference type="SMART" id="SM00853">
    <property type="entry name" value="MutL_C"/>
    <property type="match status" value="1"/>
</dbReference>
<dbReference type="SUPFAM" id="SSF55874">
    <property type="entry name" value="ATPase domain of HSP90 chaperone/DNA topoisomerase II/histidine kinase"/>
    <property type="match status" value="1"/>
</dbReference>
<dbReference type="SUPFAM" id="SSF118116">
    <property type="entry name" value="DNA mismatch repair protein MutL"/>
    <property type="match status" value="1"/>
</dbReference>
<dbReference type="SUPFAM" id="SSF54211">
    <property type="entry name" value="Ribosomal protein S5 domain 2-like"/>
    <property type="match status" value="1"/>
</dbReference>
<dbReference type="PROSITE" id="PS00058">
    <property type="entry name" value="DNA_MISMATCH_REPAIR_1"/>
    <property type="match status" value="1"/>
</dbReference>
<comment type="function">
    <text evidence="1">This protein is involved in the repair of mismatches in DNA. It is required for dam-dependent methyl-directed DNA mismatch repair. May act as a 'molecular matchmaker', a protein that promotes the formation of a stable complex between two or more DNA-binding proteins in an ATP-dependent manner without itself being part of a final effector complex.</text>
</comment>
<comment type="similarity">
    <text evidence="1">Belongs to the DNA mismatch repair MutL/HexB family.</text>
</comment>
<protein>
    <recommendedName>
        <fullName evidence="1">DNA mismatch repair protein MutL</fullName>
    </recommendedName>
</protein>
<sequence>MGKIIELNEALANQIAAGEVVERPASVVKELVENSIDAGSSKITVSVEEAGLRLIEVTDNGLGLEKEDVALALRRHATSKIKDSADLFRIRTLGFRGEALPSIASVSQMTIETSNAQEEAGTKLIAKGGTIETLEPLAKRLGTKISVANLFYNTPARLKYIKSLQAELSHITDIINRLSLAHPEISFTLVNEGKEFLKTAGNGDLRQVIAAIYGIGTAKKMREINGSDLDFELTGYVSLPELTRANRNYITILINGRFIKNFLLNRAILEGYGNRLMVGRFPFAVLSIKIDPKLADVNVHPTKQEVRLSKERELMTLISKAIDEALSEGVLIPEALENLQGRVKEKETVSVQTELPLQNNPLYYDNVRQDFFVREEAIFEINKNDNSDSLTEQNSTDYTVNQPETGSVSEKITDRTVESSNEFTDRTPKNSVSNFGVDFDNIEKLSQQSTFPQLEYLAQLHATYLLCQSKEGLYLVDQHAAQERIKYEYWKDKIGEVSMEQQILLAPYLFTLPKNDFIVLAEKKDLLHEAGVFLEEYGENQFILREHPIWLKETEIEKSINEMIDIILSSKEFSLKKYRHDLAAMVACKSSIKANHPLDAESARALLRELATCKNPYSCAHGRPTIVHFSGDDIQKMFRRIQETHRSKAASWKDFE</sequence>
<reference key="1">
    <citation type="journal article" date="2006" name="Proc. Natl. Acad. Sci. U.S.A.">
        <title>Comparative genomics of the lactic acid bacteria.</title>
        <authorList>
            <person name="Makarova K.S."/>
            <person name="Slesarev A."/>
            <person name="Wolf Y.I."/>
            <person name="Sorokin A."/>
            <person name="Mirkin B."/>
            <person name="Koonin E.V."/>
            <person name="Pavlov A."/>
            <person name="Pavlova N."/>
            <person name="Karamychev V."/>
            <person name="Polouchine N."/>
            <person name="Shakhova V."/>
            <person name="Grigoriev I."/>
            <person name="Lou Y."/>
            <person name="Rohksar D."/>
            <person name="Lucas S."/>
            <person name="Huang K."/>
            <person name="Goodstein D.M."/>
            <person name="Hawkins T."/>
            <person name="Plengvidhya V."/>
            <person name="Welker D."/>
            <person name="Hughes J."/>
            <person name="Goh Y."/>
            <person name="Benson A."/>
            <person name="Baldwin K."/>
            <person name="Lee J.-H."/>
            <person name="Diaz-Muniz I."/>
            <person name="Dosti B."/>
            <person name="Smeianov V."/>
            <person name="Wechter W."/>
            <person name="Barabote R."/>
            <person name="Lorca G."/>
            <person name="Altermann E."/>
            <person name="Barrangou R."/>
            <person name="Ganesan B."/>
            <person name="Xie Y."/>
            <person name="Rawsthorne H."/>
            <person name="Tamir D."/>
            <person name="Parker C."/>
            <person name="Breidt F."/>
            <person name="Broadbent J.R."/>
            <person name="Hutkins R."/>
            <person name="O'Sullivan D."/>
            <person name="Steele J."/>
            <person name="Unlu G."/>
            <person name="Saier M.H. Jr."/>
            <person name="Klaenhammer T."/>
            <person name="Richardson P."/>
            <person name="Kozyavkin S."/>
            <person name="Weimer B.C."/>
            <person name="Mills D.A."/>
        </authorList>
    </citation>
    <scope>NUCLEOTIDE SEQUENCE [LARGE SCALE GENOMIC DNA]</scope>
    <source>
        <strain>SK11</strain>
    </source>
</reference>